<sequence>MLICLTASHHNASFEVLEKLSVAAPSVAGALMEQNDFIAGAVVLATCNRFEAYLDVEEPLTAARALAVEATVDVVSGASGIARDDVRGSVDVKCGDAVAEHLFAVSSGLESVVVGEGEIAGQVRRALEGARTGGTTSTGLERLFQTASNTSRGVKTRTGLQSAGRSMVRLALDLAESRIADWSATRVLLVGTGAYAGASLAALRDRGVVDVHVYSPSGRAQKFAGPHGIPAVEGRDLLRALAASDMVVTCSTAPTAVLAAHHMQGAAAVSGDGRRRLVIDLGLPRNVDPDVVTVDGVELLDLETISLHAPLRDLTATDDAREIVSTAAAEFRAASAEDEVAPAVVALRTHIFDVLEGELERVRKRGDSSDATEKALRHLVSVLVHQPSVRARELARQGEGARVVDAVQALFGLDVEMPAAVSSPVAVALSRTAEAGQAS</sequence>
<keyword id="KW-0521">NADP</keyword>
<keyword id="KW-0560">Oxidoreductase</keyword>
<keyword id="KW-0627">Porphyrin biosynthesis</keyword>
<accession>A5CNH4</accession>
<feature type="chain" id="PRO_1000004612" description="Glutamyl-tRNA reductase">
    <location>
        <begin position="1"/>
        <end position="439"/>
    </location>
</feature>
<feature type="active site" description="Nucleophile" evidence="1">
    <location>
        <position position="47"/>
    </location>
</feature>
<feature type="binding site" evidence="1">
    <location>
        <begin position="46"/>
        <end position="49"/>
    </location>
    <ligand>
        <name>substrate</name>
    </ligand>
</feature>
<feature type="binding site" evidence="1">
    <location>
        <position position="111"/>
    </location>
    <ligand>
        <name>substrate</name>
    </ligand>
</feature>
<feature type="binding site" evidence="1">
    <location>
        <begin position="116"/>
        <end position="118"/>
    </location>
    <ligand>
        <name>substrate</name>
    </ligand>
</feature>
<feature type="binding site" evidence="1">
    <location>
        <position position="122"/>
    </location>
    <ligand>
        <name>substrate</name>
    </ligand>
</feature>
<feature type="binding site" evidence="1">
    <location>
        <begin position="191"/>
        <end position="196"/>
    </location>
    <ligand>
        <name>NADP(+)</name>
        <dbReference type="ChEBI" id="CHEBI:58349"/>
    </ligand>
</feature>
<feature type="site" description="Important for activity" evidence="1">
    <location>
        <position position="101"/>
    </location>
</feature>
<reference key="1">
    <citation type="journal article" date="2008" name="J. Bacteriol.">
        <title>The genome sequence of the tomato-pathogenic actinomycete Clavibacter michiganensis subsp. michiganensis NCPPB382 reveals a large island involved in pathogenicity.</title>
        <authorList>
            <person name="Gartemann K.-H."/>
            <person name="Abt B."/>
            <person name="Bekel T."/>
            <person name="Burger A."/>
            <person name="Engemann J."/>
            <person name="Fluegel M."/>
            <person name="Gaigalat L."/>
            <person name="Goesmann A."/>
            <person name="Graefen I."/>
            <person name="Kalinowski J."/>
            <person name="Kaup O."/>
            <person name="Kirchner O."/>
            <person name="Krause L."/>
            <person name="Linke B."/>
            <person name="McHardy A."/>
            <person name="Meyer F."/>
            <person name="Pohle S."/>
            <person name="Rueckert C."/>
            <person name="Schneiker S."/>
            <person name="Zellermann E.-M."/>
            <person name="Puehler A."/>
            <person name="Eichenlaub R."/>
            <person name="Kaiser O."/>
            <person name="Bartels D."/>
        </authorList>
    </citation>
    <scope>NUCLEOTIDE SEQUENCE [LARGE SCALE GENOMIC DNA]</scope>
    <source>
        <strain>NCPPB 382</strain>
    </source>
</reference>
<name>HEM1_CLAM3</name>
<protein>
    <recommendedName>
        <fullName evidence="1">Glutamyl-tRNA reductase</fullName>
        <shortName evidence="1">GluTR</shortName>
        <ecNumber evidence="1">1.2.1.70</ecNumber>
    </recommendedName>
</protein>
<evidence type="ECO:0000255" key="1">
    <source>
        <dbReference type="HAMAP-Rule" id="MF_00087"/>
    </source>
</evidence>
<comment type="function">
    <text evidence="1">Catalyzes the NADPH-dependent reduction of glutamyl-tRNA(Glu) to glutamate 1-semialdehyde (GSA).</text>
</comment>
<comment type="catalytic activity">
    <reaction evidence="1">
        <text>(S)-4-amino-5-oxopentanoate + tRNA(Glu) + NADP(+) = L-glutamyl-tRNA(Glu) + NADPH + H(+)</text>
        <dbReference type="Rhea" id="RHEA:12344"/>
        <dbReference type="Rhea" id="RHEA-COMP:9663"/>
        <dbReference type="Rhea" id="RHEA-COMP:9680"/>
        <dbReference type="ChEBI" id="CHEBI:15378"/>
        <dbReference type="ChEBI" id="CHEBI:57501"/>
        <dbReference type="ChEBI" id="CHEBI:57783"/>
        <dbReference type="ChEBI" id="CHEBI:58349"/>
        <dbReference type="ChEBI" id="CHEBI:78442"/>
        <dbReference type="ChEBI" id="CHEBI:78520"/>
        <dbReference type="EC" id="1.2.1.70"/>
    </reaction>
</comment>
<comment type="pathway">
    <text evidence="1">Porphyrin-containing compound metabolism; protoporphyrin-IX biosynthesis; 5-aminolevulinate from L-glutamyl-tRNA(Glu): step 1/2.</text>
</comment>
<comment type="subunit">
    <text evidence="1">Homodimer.</text>
</comment>
<comment type="domain">
    <text evidence="1">Possesses an unusual extended V-shaped dimeric structure with each monomer consisting of three distinct domains arranged along a curved 'spinal' alpha-helix. The N-terminal catalytic domain specifically recognizes the glutamate moiety of the substrate. The second domain is the NADPH-binding domain, and the third C-terminal domain is responsible for dimerization.</text>
</comment>
<comment type="miscellaneous">
    <text evidence="1">During catalysis, the active site Cys acts as a nucleophile attacking the alpha-carbonyl group of tRNA-bound glutamate with the formation of a thioester intermediate between enzyme and glutamate, and the concomitant release of tRNA(Glu). The thioester intermediate is finally reduced by direct hydride transfer from NADPH, to form the product GSA.</text>
</comment>
<comment type="similarity">
    <text evidence="1">Belongs to the glutamyl-tRNA reductase family.</text>
</comment>
<dbReference type="EC" id="1.2.1.70" evidence="1"/>
<dbReference type="EMBL" id="AM711867">
    <property type="protein sequence ID" value="CAN00611.1"/>
    <property type="molecule type" value="Genomic_DNA"/>
</dbReference>
<dbReference type="RefSeq" id="WP_011931806.1">
    <property type="nucleotide sequence ID" value="NC_009480.1"/>
</dbReference>
<dbReference type="SMR" id="A5CNH4"/>
<dbReference type="KEGG" id="cmi:CMM_0586"/>
<dbReference type="eggNOG" id="COG0373">
    <property type="taxonomic scope" value="Bacteria"/>
</dbReference>
<dbReference type="HOGENOM" id="CLU_035113_4_1_11"/>
<dbReference type="OrthoDB" id="110209at2"/>
<dbReference type="UniPathway" id="UPA00251">
    <property type="reaction ID" value="UER00316"/>
</dbReference>
<dbReference type="Proteomes" id="UP000001564">
    <property type="component" value="Chromosome"/>
</dbReference>
<dbReference type="GO" id="GO:0008883">
    <property type="term" value="F:glutamyl-tRNA reductase activity"/>
    <property type="evidence" value="ECO:0007669"/>
    <property type="project" value="UniProtKB-UniRule"/>
</dbReference>
<dbReference type="GO" id="GO:0050661">
    <property type="term" value="F:NADP binding"/>
    <property type="evidence" value="ECO:0007669"/>
    <property type="project" value="InterPro"/>
</dbReference>
<dbReference type="GO" id="GO:0019353">
    <property type="term" value="P:protoporphyrinogen IX biosynthetic process from glutamate"/>
    <property type="evidence" value="ECO:0007669"/>
    <property type="project" value="TreeGrafter"/>
</dbReference>
<dbReference type="Gene3D" id="3.30.460.30">
    <property type="entry name" value="Glutamyl-tRNA reductase, N-terminal domain"/>
    <property type="match status" value="1"/>
</dbReference>
<dbReference type="Gene3D" id="3.40.50.720">
    <property type="entry name" value="NAD(P)-binding Rossmann-like Domain"/>
    <property type="match status" value="1"/>
</dbReference>
<dbReference type="HAMAP" id="MF_00087">
    <property type="entry name" value="Glu_tRNA_reductase"/>
    <property type="match status" value="1"/>
</dbReference>
<dbReference type="InterPro" id="IPR000343">
    <property type="entry name" value="4pyrrol_synth_GluRdtase"/>
</dbReference>
<dbReference type="InterPro" id="IPR015896">
    <property type="entry name" value="4pyrrol_synth_GluRdtase_dimer"/>
</dbReference>
<dbReference type="InterPro" id="IPR015895">
    <property type="entry name" value="4pyrrol_synth_GluRdtase_N"/>
</dbReference>
<dbReference type="InterPro" id="IPR018214">
    <property type="entry name" value="GluRdtase_CS"/>
</dbReference>
<dbReference type="InterPro" id="IPR036453">
    <property type="entry name" value="GluRdtase_dimer_dom_sf"/>
</dbReference>
<dbReference type="InterPro" id="IPR036343">
    <property type="entry name" value="GluRdtase_N_sf"/>
</dbReference>
<dbReference type="InterPro" id="IPR036291">
    <property type="entry name" value="NAD(P)-bd_dom_sf"/>
</dbReference>
<dbReference type="InterPro" id="IPR006151">
    <property type="entry name" value="Shikm_DH/Glu-tRNA_Rdtase"/>
</dbReference>
<dbReference type="NCBIfam" id="TIGR01035">
    <property type="entry name" value="hemA"/>
    <property type="match status" value="1"/>
</dbReference>
<dbReference type="NCBIfam" id="NF000750">
    <property type="entry name" value="PRK00045.3-4"/>
    <property type="match status" value="1"/>
</dbReference>
<dbReference type="PANTHER" id="PTHR43013">
    <property type="entry name" value="GLUTAMYL-TRNA REDUCTASE"/>
    <property type="match status" value="1"/>
</dbReference>
<dbReference type="PANTHER" id="PTHR43013:SF1">
    <property type="entry name" value="GLUTAMYL-TRNA REDUCTASE"/>
    <property type="match status" value="1"/>
</dbReference>
<dbReference type="Pfam" id="PF00745">
    <property type="entry name" value="GlutR_dimer"/>
    <property type="match status" value="1"/>
</dbReference>
<dbReference type="Pfam" id="PF05201">
    <property type="entry name" value="GlutR_N"/>
    <property type="match status" value="1"/>
</dbReference>
<dbReference type="Pfam" id="PF01488">
    <property type="entry name" value="Shikimate_DH"/>
    <property type="match status" value="1"/>
</dbReference>
<dbReference type="PIRSF" id="PIRSF000445">
    <property type="entry name" value="4pyrrol_synth_GluRdtase"/>
    <property type="match status" value="1"/>
</dbReference>
<dbReference type="SUPFAM" id="SSF69742">
    <property type="entry name" value="Glutamyl tRNA-reductase catalytic, N-terminal domain"/>
    <property type="match status" value="1"/>
</dbReference>
<dbReference type="SUPFAM" id="SSF69075">
    <property type="entry name" value="Glutamyl tRNA-reductase dimerization domain"/>
    <property type="match status" value="1"/>
</dbReference>
<dbReference type="SUPFAM" id="SSF51735">
    <property type="entry name" value="NAD(P)-binding Rossmann-fold domains"/>
    <property type="match status" value="1"/>
</dbReference>
<dbReference type="PROSITE" id="PS00747">
    <property type="entry name" value="GLUTR"/>
    <property type="match status" value="1"/>
</dbReference>
<proteinExistence type="inferred from homology"/>
<organism>
    <name type="scientific">Clavibacter michiganensis subsp. michiganensis (strain NCPPB 382)</name>
    <dbReference type="NCBI Taxonomy" id="443906"/>
    <lineage>
        <taxon>Bacteria</taxon>
        <taxon>Bacillati</taxon>
        <taxon>Actinomycetota</taxon>
        <taxon>Actinomycetes</taxon>
        <taxon>Micrococcales</taxon>
        <taxon>Microbacteriaceae</taxon>
        <taxon>Clavibacter</taxon>
    </lineage>
</organism>
<gene>
    <name evidence="1" type="primary">hemA</name>
    <name type="ordered locus">CMM_0586</name>
</gene>